<comment type="function">
    <text evidence="1">Inhibits voltage-gated potassium channels.</text>
</comment>
<comment type="subcellular location">
    <subcellularLocation>
        <location evidence="1">Secreted</location>
    </subcellularLocation>
</comment>
<comment type="tissue specificity">
    <text>Expressed by the venom gland.</text>
</comment>
<comment type="domain">
    <text evidence="5">Has the structural arrangement of an alpha-helix connected to antiparallel beta-sheets by disulfide bonds (CS-alpha/beta).</text>
</comment>
<comment type="similarity">
    <text evidence="5">Belongs to the short scorpion toxin superfamily. Potassium channel inhibitor family. Alpha-KTx 06 subfamily.</text>
</comment>
<dbReference type="EMBL" id="FM998754">
    <property type="protein sequence ID" value="CAX51400.1"/>
    <property type="molecule type" value="mRNA"/>
</dbReference>
<dbReference type="SMR" id="C5J896"/>
<dbReference type="GO" id="GO:0005576">
    <property type="term" value="C:extracellular region"/>
    <property type="evidence" value="ECO:0007669"/>
    <property type="project" value="UniProtKB-SubCell"/>
</dbReference>
<dbReference type="GO" id="GO:0015459">
    <property type="term" value="F:potassium channel regulator activity"/>
    <property type="evidence" value="ECO:0007669"/>
    <property type="project" value="UniProtKB-KW"/>
</dbReference>
<dbReference type="GO" id="GO:0090729">
    <property type="term" value="F:toxin activity"/>
    <property type="evidence" value="ECO:0007669"/>
    <property type="project" value="UniProtKB-KW"/>
</dbReference>
<dbReference type="Gene3D" id="3.30.30.10">
    <property type="entry name" value="Knottin, scorpion toxin-like"/>
    <property type="match status" value="1"/>
</dbReference>
<dbReference type="InterPro" id="IPR036574">
    <property type="entry name" value="Scorpion_toxin-like_sf"/>
</dbReference>
<dbReference type="SUPFAM" id="SSF57095">
    <property type="entry name" value="Scorpion toxin-like"/>
    <property type="match status" value="1"/>
</dbReference>
<proteinExistence type="evidence at transcript level"/>
<protein>
    <recommendedName>
        <fullName>Potassium channel toxin alpha-KTx 6.16</fullName>
    </recommendedName>
    <alternativeName>
        <fullName evidence="4">OcyC12</fullName>
    </alternativeName>
</protein>
<sequence length="67" mass="7560">MNLKLALVLLLTVINVGMLPGATSNGNIKTDIKCYRNSHCNFHCEKSYYCQGSKCVRKRCNCYNCPL</sequence>
<organism>
    <name type="scientific">Opisthacanthus cayaporum</name>
    <name type="common">South American scorpion</name>
    <dbReference type="NCBI Taxonomy" id="573324"/>
    <lineage>
        <taxon>Eukaryota</taxon>
        <taxon>Metazoa</taxon>
        <taxon>Ecdysozoa</taxon>
        <taxon>Arthropoda</taxon>
        <taxon>Chelicerata</taxon>
        <taxon>Arachnida</taxon>
        <taxon>Scorpiones</taxon>
        <taxon>Iurida</taxon>
        <taxon>Scorpionoidea</taxon>
        <taxon>Hemiscorpiidae</taxon>
        <taxon>Opisthacanthus</taxon>
    </lineage>
</organism>
<accession>C5J896</accession>
<evidence type="ECO:0000250" key="1"/>
<evidence type="ECO:0000250" key="2">
    <source>
        <dbReference type="UniProtKB" id="Q10726"/>
    </source>
</evidence>
<evidence type="ECO:0000255" key="3"/>
<evidence type="ECO:0000303" key="4">
    <source>
    </source>
</evidence>
<evidence type="ECO:0000305" key="5"/>
<reference key="1">
    <citation type="journal article" date="2009" name="Toxicon">
        <title>Cloning and characterization of cDNA sequences encoding for new venom peptides of the Brazilian scorpion Opisthacanthus cayaporum.</title>
        <authorList>
            <person name="Silva E.C."/>
            <person name="Camargos T.S."/>
            <person name="Maranhao A.Q."/>
            <person name="Silva-Pereira I."/>
            <person name="Silva L.P."/>
            <person name="Possani L.D."/>
            <person name="Schwartz E.F."/>
        </authorList>
    </citation>
    <scope>NUCLEOTIDE SEQUENCE [MRNA]</scope>
    <source>
        <tissue>Venom gland</tissue>
    </source>
</reference>
<feature type="signal peptide" evidence="3">
    <location>
        <begin position="1"/>
        <end position="24"/>
    </location>
</feature>
<feature type="chain" id="PRO_0000398609" description="Potassium channel toxin alpha-KTx 6.16">
    <location>
        <begin position="25"/>
        <end position="67"/>
    </location>
</feature>
<feature type="disulfide bond" evidence="2">
    <location>
        <begin position="34"/>
        <end position="55"/>
    </location>
</feature>
<feature type="disulfide bond" evidence="2">
    <location>
        <begin position="40"/>
        <end position="60"/>
    </location>
</feature>
<feature type="disulfide bond" evidence="2">
    <location>
        <begin position="44"/>
        <end position="62"/>
    </location>
</feature>
<feature type="disulfide bond" evidence="2">
    <location>
        <begin position="50"/>
        <end position="65"/>
    </location>
</feature>
<name>KAX6G_OPICY</name>
<keyword id="KW-1015">Disulfide bond</keyword>
<keyword id="KW-0872">Ion channel impairing toxin</keyword>
<keyword id="KW-0528">Neurotoxin</keyword>
<keyword id="KW-0632">Potassium channel impairing toxin</keyword>
<keyword id="KW-0964">Secreted</keyword>
<keyword id="KW-0732">Signal</keyword>
<keyword id="KW-0800">Toxin</keyword>